<accession>A9M3V3</accession>
<comment type="function">
    <text evidence="1">Binds 16S rRNA, required for the assembly of 30S particles and may also be responsible for determining the conformation of the 16S rRNA at the A site.</text>
</comment>
<comment type="subunit">
    <text evidence="1">Part of the 30S ribosomal subunit. Contacts proteins S3 and S10.</text>
</comment>
<comment type="similarity">
    <text evidence="1">Belongs to the universal ribosomal protein uS14 family.</text>
</comment>
<feature type="chain" id="PRO_1000128461" description="Small ribosomal subunit protein uS14">
    <location>
        <begin position="1"/>
        <end position="101"/>
    </location>
</feature>
<name>RS14_NEIM0</name>
<organism>
    <name type="scientific">Neisseria meningitidis serogroup C (strain 053442)</name>
    <dbReference type="NCBI Taxonomy" id="374833"/>
    <lineage>
        <taxon>Bacteria</taxon>
        <taxon>Pseudomonadati</taxon>
        <taxon>Pseudomonadota</taxon>
        <taxon>Betaproteobacteria</taxon>
        <taxon>Neisseriales</taxon>
        <taxon>Neisseriaceae</taxon>
        <taxon>Neisseria</taxon>
    </lineage>
</organism>
<gene>
    <name evidence="1" type="primary">rpsN</name>
    <name type="ordered locus">NMCC_1993</name>
</gene>
<dbReference type="EMBL" id="CP000381">
    <property type="protein sequence ID" value="ABX74116.1"/>
    <property type="molecule type" value="Genomic_DNA"/>
</dbReference>
<dbReference type="RefSeq" id="WP_002216244.1">
    <property type="nucleotide sequence ID" value="NC_010120.1"/>
</dbReference>
<dbReference type="SMR" id="A9M3V3"/>
<dbReference type="GeneID" id="93387230"/>
<dbReference type="KEGG" id="nmn:NMCC_1993"/>
<dbReference type="HOGENOM" id="CLU_139869_0_1_4"/>
<dbReference type="Proteomes" id="UP000001177">
    <property type="component" value="Chromosome"/>
</dbReference>
<dbReference type="GO" id="GO:0005737">
    <property type="term" value="C:cytoplasm"/>
    <property type="evidence" value="ECO:0007669"/>
    <property type="project" value="UniProtKB-ARBA"/>
</dbReference>
<dbReference type="GO" id="GO:0015935">
    <property type="term" value="C:small ribosomal subunit"/>
    <property type="evidence" value="ECO:0007669"/>
    <property type="project" value="TreeGrafter"/>
</dbReference>
<dbReference type="GO" id="GO:0019843">
    <property type="term" value="F:rRNA binding"/>
    <property type="evidence" value="ECO:0007669"/>
    <property type="project" value="UniProtKB-UniRule"/>
</dbReference>
<dbReference type="GO" id="GO:0003735">
    <property type="term" value="F:structural constituent of ribosome"/>
    <property type="evidence" value="ECO:0007669"/>
    <property type="project" value="InterPro"/>
</dbReference>
<dbReference type="GO" id="GO:0006412">
    <property type="term" value="P:translation"/>
    <property type="evidence" value="ECO:0007669"/>
    <property type="project" value="UniProtKB-UniRule"/>
</dbReference>
<dbReference type="FunFam" id="1.10.287.1480:FF:000001">
    <property type="entry name" value="30S ribosomal protein S14"/>
    <property type="match status" value="1"/>
</dbReference>
<dbReference type="Gene3D" id="1.10.287.1480">
    <property type="match status" value="1"/>
</dbReference>
<dbReference type="HAMAP" id="MF_00537">
    <property type="entry name" value="Ribosomal_uS14_1"/>
    <property type="match status" value="1"/>
</dbReference>
<dbReference type="InterPro" id="IPR001209">
    <property type="entry name" value="Ribosomal_uS14"/>
</dbReference>
<dbReference type="InterPro" id="IPR023036">
    <property type="entry name" value="Ribosomal_uS14_bac/plastid"/>
</dbReference>
<dbReference type="NCBIfam" id="NF006477">
    <property type="entry name" value="PRK08881.1"/>
    <property type="match status" value="1"/>
</dbReference>
<dbReference type="PANTHER" id="PTHR19836">
    <property type="entry name" value="30S RIBOSOMAL PROTEIN S14"/>
    <property type="match status" value="1"/>
</dbReference>
<dbReference type="PANTHER" id="PTHR19836:SF19">
    <property type="entry name" value="SMALL RIBOSOMAL SUBUNIT PROTEIN US14M"/>
    <property type="match status" value="1"/>
</dbReference>
<dbReference type="Pfam" id="PF00253">
    <property type="entry name" value="Ribosomal_S14"/>
    <property type="match status" value="1"/>
</dbReference>
<dbReference type="SUPFAM" id="SSF57716">
    <property type="entry name" value="Glucocorticoid receptor-like (DNA-binding domain)"/>
    <property type="match status" value="1"/>
</dbReference>
<reference key="1">
    <citation type="journal article" date="2008" name="Genomics">
        <title>Characterization of ST-4821 complex, a unique Neisseria meningitidis clone.</title>
        <authorList>
            <person name="Peng J."/>
            <person name="Yang L."/>
            <person name="Yang F."/>
            <person name="Yang J."/>
            <person name="Yan Y."/>
            <person name="Nie H."/>
            <person name="Zhang X."/>
            <person name="Xiong Z."/>
            <person name="Jiang Y."/>
            <person name="Cheng F."/>
            <person name="Xu X."/>
            <person name="Chen S."/>
            <person name="Sun L."/>
            <person name="Li W."/>
            <person name="Shen Y."/>
            <person name="Shao Z."/>
            <person name="Liang X."/>
            <person name="Xu J."/>
            <person name="Jin Q."/>
        </authorList>
    </citation>
    <scope>NUCLEOTIDE SEQUENCE [LARGE SCALE GENOMIC DNA]</scope>
    <source>
        <strain>053442</strain>
    </source>
</reference>
<sequence length="101" mass="11518">MAKKALINRDLKRQALAKKYAAKRAAIKAVINDSNATEEERFEARLRFQSIPRNAAPVRQRRRCALTGRPRGTFRKFGLGRIKIREIAMRGEIPGVVKASW</sequence>
<protein>
    <recommendedName>
        <fullName evidence="1">Small ribosomal subunit protein uS14</fullName>
    </recommendedName>
    <alternativeName>
        <fullName evidence="2">30S ribosomal protein S14</fullName>
    </alternativeName>
</protein>
<keyword id="KW-0687">Ribonucleoprotein</keyword>
<keyword id="KW-0689">Ribosomal protein</keyword>
<keyword id="KW-0694">RNA-binding</keyword>
<keyword id="KW-0699">rRNA-binding</keyword>
<evidence type="ECO:0000255" key="1">
    <source>
        <dbReference type="HAMAP-Rule" id="MF_00537"/>
    </source>
</evidence>
<evidence type="ECO:0000305" key="2"/>
<proteinExistence type="inferred from homology"/>